<sequence>MSRPSLTRFLIEEQHAGRIDAELRQLITIVSRACKRISIAVSKGALGGVLGDAGTGNVQGEAQKKLDVLSNDILLEANAWGGHLAACASEEMDHSQPVPEQYPSGDFLLLFDPLDGSSNIDVNVSVGTIFSVLRAPKGTEKPGDEHFLQPGTQQVAAGYCIYGPSTMLVLTLGHGTHAFTLEREEGSFLLTQANMRVPDETAEYAINMSNQRHWEPAMQAYVGDLLAGKDGARGKDFNMRWIASMVADVHRILTRGGIFIYPWDKKDPSKPGKLRLMYEANPMSMLVEQAGGAATTGRERILDIQPTQLHQRVPVFLGSKNEVAAATRYHLDADKA</sequence>
<name>F16PA_XANOR</name>
<gene>
    <name evidence="1" type="primary">fbp</name>
    <name type="ordered locus">XOO0015</name>
</gene>
<evidence type="ECO:0000255" key="1">
    <source>
        <dbReference type="HAMAP-Rule" id="MF_01855"/>
    </source>
</evidence>
<evidence type="ECO:0000305" key="2"/>
<comment type="catalytic activity">
    <reaction evidence="1">
        <text>beta-D-fructose 1,6-bisphosphate + H2O = beta-D-fructose 6-phosphate + phosphate</text>
        <dbReference type="Rhea" id="RHEA:11064"/>
        <dbReference type="ChEBI" id="CHEBI:15377"/>
        <dbReference type="ChEBI" id="CHEBI:32966"/>
        <dbReference type="ChEBI" id="CHEBI:43474"/>
        <dbReference type="ChEBI" id="CHEBI:57634"/>
        <dbReference type="EC" id="3.1.3.11"/>
    </reaction>
</comment>
<comment type="cofactor">
    <cofactor evidence="1">
        <name>Mg(2+)</name>
        <dbReference type="ChEBI" id="CHEBI:18420"/>
    </cofactor>
    <text evidence="1">Binds 2 magnesium ions per subunit.</text>
</comment>
<comment type="pathway">
    <text evidence="1">Carbohydrate biosynthesis; gluconeogenesis.</text>
</comment>
<comment type="subunit">
    <text evidence="1">Homotetramer.</text>
</comment>
<comment type="subcellular location">
    <subcellularLocation>
        <location evidence="1">Cytoplasm</location>
    </subcellularLocation>
</comment>
<comment type="similarity">
    <text evidence="1">Belongs to the FBPase class 1 family.</text>
</comment>
<comment type="sequence caution" evidence="2">
    <conflict type="erroneous initiation">
        <sequence resource="EMBL-CDS" id="AAW73269"/>
    </conflict>
</comment>
<proteinExistence type="inferred from homology"/>
<organism>
    <name type="scientific">Xanthomonas oryzae pv. oryzae (strain KACC10331 / KXO85)</name>
    <dbReference type="NCBI Taxonomy" id="291331"/>
    <lineage>
        <taxon>Bacteria</taxon>
        <taxon>Pseudomonadati</taxon>
        <taxon>Pseudomonadota</taxon>
        <taxon>Gammaproteobacteria</taxon>
        <taxon>Lysobacterales</taxon>
        <taxon>Lysobacteraceae</taxon>
        <taxon>Xanthomonas</taxon>
    </lineage>
</organism>
<reference key="1">
    <citation type="journal article" date="2005" name="Nucleic Acids Res.">
        <title>The genome sequence of Xanthomonas oryzae pathovar oryzae KACC10331, the bacterial blight pathogen of rice.</title>
        <authorList>
            <person name="Lee B.-M."/>
            <person name="Park Y.-J."/>
            <person name="Park D.-S."/>
            <person name="Kang H.-W."/>
            <person name="Kim J.-G."/>
            <person name="Song E.-S."/>
            <person name="Park I.-C."/>
            <person name="Yoon U.-H."/>
            <person name="Hahn J.-H."/>
            <person name="Koo B.-S."/>
            <person name="Lee G.-B."/>
            <person name="Kim H."/>
            <person name="Park H.-S."/>
            <person name="Yoon K.-O."/>
            <person name="Kim J.-H."/>
            <person name="Jung C.-H."/>
            <person name="Koh N.-H."/>
            <person name="Seo J.-S."/>
            <person name="Go S.-J."/>
        </authorList>
    </citation>
    <scope>NUCLEOTIDE SEQUENCE [LARGE SCALE GENOMIC DNA]</scope>
    <source>
        <strain>KACC10331 / KXO85</strain>
    </source>
</reference>
<accession>Q5H701</accession>
<protein>
    <recommendedName>
        <fullName evidence="1">Fructose-1,6-bisphosphatase class 1</fullName>
        <shortName evidence="1">FBPase class 1</shortName>
        <ecNumber evidence="1">3.1.3.11</ecNumber>
    </recommendedName>
    <alternativeName>
        <fullName evidence="1">D-fructose-1,6-bisphosphate 1-phosphohydrolase class 1</fullName>
    </alternativeName>
</protein>
<keyword id="KW-0119">Carbohydrate metabolism</keyword>
<keyword id="KW-0963">Cytoplasm</keyword>
<keyword id="KW-0378">Hydrolase</keyword>
<keyword id="KW-0460">Magnesium</keyword>
<keyword id="KW-0479">Metal-binding</keyword>
<keyword id="KW-1185">Reference proteome</keyword>
<feature type="chain" id="PRO_0000364755" description="Fructose-1,6-bisphosphatase class 1">
    <location>
        <begin position="1"/>
        <end position="336"/>
    </location>
</feature>
<feature type="binding site" evidence="1">
    <location>
        <position position="90"/>
    </location>
    <ligand>
        <name>Mg(2+)</name>
        <dbReference type="ChEBI" id="CHEBI:18420"/>
        <label>1</label>
    </ligand>
</feature>
<feature type="binding site" evidence="1">
    <location>
        <position position="112"/>
    </location>
    <ligand>
        <name>Mg(2+)</name>
        <dbReference type="ChEBI" id="CHEBI:18420"/>
        <label>1</label>
    </ligand>
</feature>
<feature type="binding site" evidence="1">
    <location>
        <position position="112"/>
    </location>
    <ligand>
        <name>Mg(2+)</name>
        <dbReference type="ChEBI" id="CHEBI:18420"/>
        <label>2</label>
    </ligand>
</feature>
<feature type="binding site" evidence="1">
    <location>
        <position position="114"/>
    </location>
    <ligand>
        <name>Mg(2+)</name>
        <dbReference type="ChEBI" id="CHEBI:18420"/>
        <label>1</label>
    </ligand>
</feature>
<feature type="binding site" evidence="1">
    <location>
        <begin position="115"/>
        <end position="118"/>
    </location>
    <ligand>
        <name>substrate</name>
    </ligand>
</feature>
<feature type="binding site" evidence="1">
    <location>
        <position position="115"/>
    </location>
    <ligand>
        <name>Mg(2+)</name>
        <dbReference type="ChEBI" id="CHEBI:18420"/>
        <label>2</label>
    </ligand>
</feature>
<feature type="binding site" evidence="1">
    <location>
        <position position="207"/>
    </location>
    <ligand>
        <name>substrate</name>
    </ligand>
</feature>
<feature type="binding site" evidence="1">
    <location>
        <position position="273"/>
    </location>
    <ligand>
        <name>substrate</name>
    </ligand>
</feature>
<feature type="binding site" evidence="1">
    <location>
        <position position="279"/>
    </location>
    <ligand>
        <name>Mg(2+)</name>
        <dbReference type="ChEBI" id="CHEBI:18420"/>
        <label>2</label>
    </ligand>
</feature>
<dbReference type="EC" id="3.1.3.11" evidence="1"/>
<dbReference type="EMBL" id="AE013598">
    <property type="protein sequence ID" value="AAW73269.1"/>
    <property type="status" value="ALT_INIT"/>
    <property type="molecule type" value="Genomic_DNA"/>
</dbReference>
<dbReference type="SMR" id="Q5H701"/>
<dbReference type="STRING" id="291331.XOO0015"/>
<dbReference type="KEGG" id="xoo:XOO0015"/>
<dbReference type="HOGENOM" id="CLU_039977_0_0_6"/>
<dbReference type="UniPathway" id="UPA00138"/>
<dbReference type="Proteomes" id="UP000006735">
    <property type="component" value="Chromosome"/>
</dbReference>
<dbReference type="GO" id="GO:0005829">
    <property type="term" value="C:cytosol"/>
    <property type="evidence" value="ECO:0007669"/>
    <property type="project" value="TreeGrafter"/>
</dbReference>
<dbReference type="GO" id="GO:0042132">
    <property type="term" value="F:fructose 1,6-bisphosphate 1-phosphatase activity"/>
    <property type="evidence" value="ECO:0007669"/>
    <property type="project" value="UniProtKB-UniRule"/>
</dbReference>
<dbReference type="GO" id="GO:0000287">
    <property type="term" value="F:magnesium ion binding"/>
    <property type="evidence" value="ECO:0007669"/>
    <property type="project" value="UniProtKB-UniRule"/>
</dbReference>
<dbReference type="GO" id="GO:0030388">
    <property type="term" value="P:fructose 1,6-bisphosphate metabolic process"/>
    <property type="evidence" value="ECO:0007669"/>
    <property type="project" value="TreeGrafter"/>
</dbReference>
<dbReference type="GO" id="GO:0006002">
    <property type="term" value="P:fructose 6-phosphate metabolic process"/>
    <property type="evidence" value="ECO:0007669"/>
    <property type="project" value="TreeGrafter"/>
</dbReference>
<dbReference type="GO" id="GO:0006000">
    <property type="term" value="P:fructose metabolic process"/>
    <property type="evidence" value="ECO:0007669"/>
    <property type="project" value="TreeGrafter"/>
</dbReference>
<dbReference type="GO" id="GO:0006094">
    <property type="term" value="P:gluconeogenesis"/>
    <property type="evidence" value="ECO:0007669"/>
    <property type="project" value="UniProtKB-UniRule"/>
</dbReference>
<dbReference type="GO" id="GO:0005986">
    <property type="term" value="P:sucrose biosynthetic process"/>
    <property type="evidence" value="ECO:0007669"/>
    <property type="project" value="TreeGrafter"/>
</dbReference>
<dbReference type="CDD" id="cd00354">
    <property type="entry name" value="FBPase"/>
    <property type="match status" value="1"/>
</dbReference>
<dbReference type="FunFam" id="3.30.540.10:FF:000006">
    <property type="entry name" value="Fructose-1,6-bisphosphatase class 1"/>
    <property type="match status" value="1"/>
</dbReference>
<dbReference type="FunFam" id="3.40.190.80:FF:000011">
    <property type="entry name" value="Fructose-1,6-bisphosphatase class 1"/>
    <property type="match status" value="1"/>
</dbReference>
<dbReference type="Gene3D" id="3.40.190.80">
    <property type="match status" value="1"/>
</dbReference>
<dbReference type="Gene3D" id="3.30.540.10">
    <property type="entry name" value="Fructose-1,6-Bisphosphatase, subunit A, domain 1"/>
    <property type="match status" value="1"/>
</dbReference>
<dbReference type="HAMAP" id="MF_01855">
    <property type="entry name" value="FBPase_class1"/>
    <property type="match status" value="1"/>
</dbReference>
<dbReference type="InterPro" id="IPR044015">
    <property type="entry name" value="FBPase_C_dom"/>
</dbReference>
<dbReference type="InterPro" id="IPR000146">
    <property type="entry name" value="FBPase_class-1"/>
</dbReference>
<dbReference type="InterPro" id="IPR033391">
    <property type="entry name" value="FBPase_N"/>
</dbReference>
<dbReference type="InterPro" id="IPR028343">
    <property type="entry name" value="FBPtase"/>
</dbReference>
<dbReference type="NCBIfam" id="NF006779">
    <property type="entry name" value="PRK09293.1-3"/>
    <property type="match status" value="1"/>
</dbReference>
<dbReference type="NCBIfam" id="NF006780">
    <property type="entry name" value="PRK09293.1-4"/>
    <property type="match status" value="1"/>
</dbReference>
<dbReference type="PANTHER" id="PTHR11556">
    <property type="entry name" value="FRUCTOSE-1,6-BISPHOSPHATASE-RELATED"/>
    <property type="match status" value="1"/>
</dbReference>
<dbReference type="PANTHER" id="PTHR11556:SF35">
    <property type="entry name" value="SEDOHEPTULOSE-1,7-BISPHOSPHATASE, CHLOROPLASTIC"/>
    <property type="match status" value="1"/>
</dbReference>
<dbReference type="Pfam" id="PF00316">
    <property type="entry name" value="FBPase"/>
    <property type="match status" value="1"/>
</dbReference>
<dbReference type="Pfam" id="PF18913">
    <property type="entry name" value="FBPase_C"/>
    <property type="match status" value="1"/>
</dbReference>
<dbReference type="PIRSF" id="PIRSF500210">
    <property type="entry name" value="FBPtase"/>
    <property type="match status" value="1"/>
</dbReference>
<dbReference type="PIRSF" id="PIRSF000904">
    <property type="entry name" value="FBPtase_SBPase"/>
    <property type="match status" value="1"/>
</dbReference>
<dbReference type="PRINTS" id="PR00115">
    <property type="entry name" value="F16BPHPHTASE"/>
</dbReference>
<dbReference type="SUPFAM" id="SSF56655">
    <property type="entry name" value="Carbohydrate phosphatase"/>
    <property type="match status" value="1"/>
</dbReference>